<reference key="1">
    <citation type="submission" date="2008-02" db="EMBL/GenBank/DDBJ databases">
        <title>Complete sequence of Pseudomonas putida W619.</title>
        <authorList>
            <person name="Copeland A."/>
            <person name="Lucas S."/>
            <person name="Lapidus A."/>
            <person name="Barry K."/>
            <person name="Detter J.C."/>
            <person name="Glavina del Rio T."/>
            <person name="Dalin E."/>
            <person name="Tice H."/>
            <person name="Pitluck S."/>
            <person name="Chain P."/>
            <person name="Malfatti S."/>
            <person name="Shin M."/>
            <person name="Vergez L."/>
            <person name="Schmutz J."/>
            <person name="Larimer F."/>
            <person name="Land M."/>
            <person name="Hauser L."/>
            <person name="Kyrpides N."/>
            <person name="Kim E."/>
            <person name="Taghavi S."/>
            <person name="Vangronsveld D."/>
            <person name="van der Lelie D."/>
            <person name="Richardson P."/>
        </authorList>
    </citation>
    <scope>NUCLEOTIDE SEQUENCE [LARGE SCALE GENOMIC DNA]</scope>
    <source>
        <strain>W619</strain>
    </source>
</reference>
<accession>B1JDU1</accession>
<comment type="function">
    <text evidence="1">Involved in the post-transcriptional modification of the uridine at the wobble position (U34) of tRNA(Lys), tRNA(Glu) and tRNA(Gln). Catalyzes the conversion of 2-thiouridine (S2U-RNA) to 2-selenouridine (Se2U-RNA). Acts in a two-step process involving geranylation of 2-thiouridine (S2U) to S-geranyl-2-thiouridine (geS2U) and subsequent selenation of the latter derivative to 2-selenouridine (Se2U) in the tRNA chain.</text>
</comment>
<comment type="catalytic activity">
    <reaction evidence="1">
        <text>5-methylaminomethyl-2-thiouridine(34) in tRNA + selenophosphate + (2E)-geranyl diphosphate + H2O + H(+) = 5-methylaminomethyl-2-selenouridine(34) in tRNA + (2E)-thiogeraniol + phosphate + diphosphate</text>
        <dbReference type="Rhea" id="RHEA:42716"/>
        <dbReference type="Rhea" id="RHEA-COMP:10195"/>
        <dbReference type="Rhea" id="RHEA-COMP:10196"/>
        <dbReference type="ChEBI" id="CHEBI:15377"/>
        <dbReference type="ChEBI" id="CHEBI:15378"/>
        <dbReference type="ChEBI" id="CHEBI:16144"/>
        <dbReference type="ChEBI" id="CHEBI:33019"/>
        <dbReference type="ChEBI" id="CHEBI:43474"/>
        <dbReference type="ChEBI" id="CHEBI:58057"/>
        <dbReference type="ChEBI" id="CHEBI:74455"/>
        <dbReference type="ChEBI" id="CHEBI:82743"/>
        <dbReference type="ChEBI" id="CHEBI:143703"/>
        <dbReference type="EC" id="2.9.1.3"/>
    </reaction>
    <physiologicalReaction direction="left-to-right" evidence="1">
        <dbReference type="Rhea" id="RHEA:42717"/>
    </physiologicalReaction>
</comment>
<comment type="catalytic activity">
    <reaction evidence="1">
        <text>5-methylaminomethyl-2-thiouridine(34) in tRNA + (2E)-geranyl diphosphate = 5-methylaminomethyl-S-(2E)-geranyl-thiouridine(34) in tRNA + diphosphate</text>
        <dbReference type="Rhea" id="RHEA:14085"/>
        <dbReference type="Rhea" id="RHEA-COMP:10195"/>
        <dbReference type="Rhea" id="RHEA-COMP:14654"/>
        <dbReference type="ChEBI" id="CHEBI:33019"/>
        <dbReference type="ChEBI" id="CHEBI:58057"/>
        <dbReference type="ChEBI" id="CHEBI:74455"/>
        <dbReference type="ChEBI" id="CHEBI:140632"/>
    </reaction>
    <physiologicalReaction direction="left-to-right" evidence="1">
        <dbReference type="Rhea" id="RHEA:14086"/>
    </physiologicalReaction>
</comment>
<comment type="catalytic activity">
    <reaction evidence="1">
        <text>5-methylaminomethyl-S-(2E)-geranyl-thiouridine(34) in tRNA + selenophosphate + H(+) = 5-methylaminomethyl-2-(Se-phospho)selenouridine(34) in tRNA + (2E)-thiogeraniol</text>
        <dbReference type="Rhea" id="RHEA:60172"/>
        <dbReference type="Rhea" id="RHEA-COMP:14654"/>
        <dbReference type="Rhea" id="RHEA-COMP:15523"/>
        <dbReference type="ChEBI" id="CHEBI:15378"/>
        <dbReference type="ChEBI" id="CHEBI:16144"/>
        <dbReference type="ChEBI" id="CHEBI:140632"/>
        <dbReference type="ChEBI" id="CHEBI:143702"/>
        <dbReference type="ChEBI" id="CHEBI:143703"/>
    </reaction>
    <physiologicalReaction direction="left-to-right" evidence="1">
        <dbReference type="Rhea" id="RHEA:60173"/>
    </physiologicalReaction>
</comment>
<comment type="catalytic activity">
    <reaction evidence="1">
        <text>5-methylaminomethyl-2-(Se-phospho)selenouridine(34) in tRNA + H2O = 5-methylaminomethyl-2-selenouridine(34) in tRNA + phosphate</text>
        <dbReference type="Rhea" id="RHEA:60176"/>
        <dbReference type="Rhea" id="RHEA-COMP:10196"/>
        <dbReference type="Rhea" id="RHEA-COMP:15523"/>
        <dbReference type="ChEBI" id="CHEBI:15377"/>
        <dbReference type="ChEBI" id="CHEBI:43474"/>
        <dbReference type="ChEBI" id="CHEBI:82743"/>
        <dbReference type="ChEBI" id="CHEBI:143702"/>
    </reaction>
    <physiologicalReaction direction="left-to-right" evidence="1">
        <dbReference type="Rhea" id="RHEA:60177"/>
    </physiologicalReaction>
</comment>
<comment type="subunit">
    <text evidence="1">Monomer.</text>
</comment>
<comment type="similarity">
    <text evidence="1">Belongs to the SelU family.</text>
</comment>
<feature type="chain" id="PRO_1000186078" description="tRNA 2-selenouridine synthase">
    <location>
        <begin position="1"/>
        <end position="365"/>
    </location>
</feature>
<feature type="domain" description="Rhodanese" evidence="1">
    <location>
        <begin position="12"/>
        <end position="136"/>
    </location>
</feature>
<feature type="active site" description="S-selanylcysteine intermediate" evidence="1">
    <location>
        <position position="95"/>
    </location>
</feature>
<organism>
    <name type="scientific">Pseudomonas putida (strain W619)</name>
    <dbReference type="NCBI Taxonomy" id="390235"/>
    <lineage>
        <taxon>Bacteria</taxon>
        <taxon>Pseudomonadati</taxon>
        <taxon>Pseudomonadota</taxon>
        <taxon>Gammaproteobacteria</taxon>
        <taxon>Pseudomonadales</taxon>
        <taxon>Pseudomonadaceae</taxon>
        <taxon>Pseudomonas</taxon>
    </lineage>
</organism>
<gene>
    <name evidence="1" type="primary">selU</name>
    <name type="ordered locus">PputW619_4364</name>
</gene>
<protein>
    <recommendedName>
        <fullName evidence="1">tRNA 2-selenouridine synthase</fullName>
        <ecNumber evidence="1">2.9.1.3</ecNumber>
    </recommendedName>
</protein>
<keyword id="KW-0711">Selenium</keyword>
<keyword id="KW-0808">Transferase</keyword>
<evidence type="ECO:0000255" key="1">
    <source>
        <dbReference type="HAMAP-Rule" id="MF_01622"/>
    </source>
</evidence>
<sequence length="365" mass="41592">MRHDCTDFRQLFLDDVPMMDMRAPVEFAKGAFPGVVNLPLMTDQERQKVGTCYKQQGQAAAITLGHQLVSGTLKRERLHAWASFAKAHPDGYLYCARGGLRSLIVQQWLRDEAGIAYPRIKGGYKALRTFLLDTTQQAVEQCDFVLVGGLTGTGKTDVLHQLNNVIDLEGHANHRGSSFGKRATAQPAQIDFENKLAIDVLKKRARGIEQFVLEDEGRIVGSCTVPLELYQGMQQYPLVWLEDSFENRVERILRDYVINLCAEFVALHGEELGRRLFAERLLQSMSNIHKRLGGERYQRLSEIMRLALDEQQRSGGIDLHRGWIEGLLKEYYDPMYAYQRDAKADRVEFAGDAVEVREYLKARNR</sequence>
<dbReference type="EC" id="2.9.1.3" evidence="1"/>
<dbReference type="EMBL" id="CP000949">
    <property type="protein sequence ID" value="ACA74844.1"/>
    <property type="molecule type" value="Genomic_DNA"/>
</dbReference>
<dbReference type="SMR" id="B1JDU1"/>
<dbReference type="STRING" id="390235.PputW619_4364"/>
<dbReference type="KEGG" id="ppw:PputW619_4364"/>
<dbReference type="eggNOG" id="COG2603">
    <property type="taxonomic scope" value="Bacteria"/>
</dbReference>
<dbReference type="HOGENOM" id="CLU_043456_1_0_6"/>
<dbReference type="OrthoDB" id="9808735at2"/>
<dbReference type="GO" id="GO:0016765">
    <property type="term" value="F:transferase activity, transferring alkyl or aryl (other than methyl) groups"/>
    <property type="evidence" value="ECO:0007669"/>
    <property type="project" value="UniProtKB-UniRule"/>
</dbReference>
<dbReference type="GO" id="GO:0043828">
    <property type="term" value="F:tRNA 2-selenouridine synthase activity"/>
    <property type="evidence" value="ECO:0007669"/>
    <property type="project" value="UniProtKB-EC"/>
</dbReference>
<dbReference type="GO" id="GO:0002098">
    <property type="term" value="P:tRNA wobble uridine modification"/>
    <property type="evidence" value="ECO:0007669"/>
    <property type="project" value="UniProtKB-UniRule"/>
</dbReference>
<dbReference type="CDD" id="cd01520">
    <property type="entry name" value="RHOD_YbbB"/>
    <property type="match status" value="1"/>
</dbReference>
<dbReference type="Gene3D" id="3.40.250.10">
    <property type="entry name" value="Rhodanese-like domain"/>
    <property type="match status" value="1"/>
</dbReference>
<dbReference type="HAMAP" id="MF_01622">
    <property type="entry name" value="tRNA_sel_U_synth"/>
    <property type="match status" value="1"/>
</dbReference>
<dbReference type="InterPro" id="IPR001763">
    <property type="entry name" value="Rhodanese-like_dom"/>
</dbReference>
<dbReference type="InterPro" id="IPR036873">
    <property type="entry name" value="Rhodanese-like_dom_sf"/>
</dbReference>
<dbReference type="InterPro" id="IPR017582">
    <property type="entry name" value="SelU"/>
</dbReference>
<dbReference type="NCBIfam" id="NF008750">
    <property type="entry name" value="PRK11784.1-2"/>
    <property type="match status" value="1"/>
</dbReference>
<dbReference type="NCBIfam" id="NF008751">
    <property type="entry name" value="PRK11784.1-3"/>
    <property type="match status" value="1"/>
</dbReference>
<dbReference type="NCBIfam" id="TIGR03167">
    <property type="entry name" value="tRNA_sel_U_synt"/>
    <property type="match status" value="1"/>
</dbReference>
<dbReference type="PANTHER" id="PTHR30401">
    <property type="entry name" value="TRNA 2-SELENOURIDINE SYNTHASE"/>
    <property type="match status" value="1"/>
</dbReference>
<dbReference type="PANTHER" id="PTHR30401:SF0">
    <property type="entry name" value="TRNA 2-SELENOURIDINE SYNTHASE"/>
    <property type="match status" value="1"/>
</dbReference>
<dbReference type="SUPFAM" id="SSF52821">
    <property type="entry name" value="Rhodanese/Cell cycle control phosphatase"/>
    <property type="match status" value="1"/>
</dbReference>
<dbReference type="PROSITE" id="PS50206">
    <property type="entry name" value="RHODANESE_3"/>
    <property type="match status" value="1"/>
</dbReference>
<name>SELU_PSEPW</name>
<proteinExistence type="inferred from homology"/>